<feature type="chain" id="PRO_0000080937" description="Guanine nucleotide exchange factor DBS">
    <location>
        <begin position="1"/>
        <end position="1149"/>
    </location>
</feature>
<feature type="domain" description="CRAL-TRIO" evidence="4">
    <location>
        <begin position="52"/>
        <end position="224"/>
    </location>
</feature>
<feature type="repeat" description="Spectrin">
    <location>
        <begin position="355"/>
        <end position="454"/>
    </location>
</feature>
<feature type="domain" description="DH" evidence="5">
    <location>
        <begin position="632"/>
        <end position="812"/>
    </location>
</feature>
<feature type="domain" description="PH" evidence="6">
    <location>
        <begin position="830"/>
        <end position="946"/>
    </location>
</feature>
<feature type="domain" description="SH3" evidence="7">
    <location>
        <begin position="1055"/>
        <end position="1116"/>
    </location>
</feature>
<feature type="region of interest" description="Disordered" evidence="8">
    <location>
        <begin position="555"/>
        <end position="627"/>
    </location>
</feature>
<feature type="region of interest" description="Disordered" evidence="8">
    <location>
        <begin position="956"/>
        <end position="1033"/>
    </location>
</feature>
<feature type="coiled-coil region" evidence="3">
    <location>
        <begin position="503"/>
        <end position="528"/>
    </location>
</feature>
<feature type="compositionally biased region" description="Low complexity" evidence="8">
    <location>
        <begin position="583"/>
        <end position="594"/>
    </location>
</feature>
<feature type="compositionally biased region" description="Basic and acidic residues" evidence="8">
    <location>
        <begin position="607"/>
        <end position="616"/>
    </location>
</feature>
<feature type="compositionally biased region" description="Low complexity" evidence="8">
    <location>
        <begin position="964"/>
        <end position="978"/>
    </location>
</feature>
<feature type="modified residue" description="Phosphoserine" evidence="12">
    <location>
        <position position="457"/>
    </location>
</feature>
<feature type="modified residue" description="Phosphoserine" evidence="12">
    <location>
        <position position="462"/>
    </location>
</feature>
<feature type="modified residue" description="Phosphoserine" evidence="12">
    <location>
        <position position="471"/>
    </location>
</feature>
<feature type="modified residue" description="Phosphoserine" evidence="12">
    <location>
        <position position="480"/>
    </location>
</feature>
<feature type="modified residue" description="Phosphoserine" evidence="2">
    <location>
        <position position="621"/>
    </location>
</feature>
<feature type="modified residue" description="Phosphothreonine" evidence="2">
    <location>
        <position position="622"/>
    </location>
</feature>
<feature type="modified residue" description="Phosphoserine" evidence="2">
    <location>
        <position position="1033"/>
    </location>
</feature>
<feature type="modified residue" description="Phosphoserine" evidence="2">
    <location>
        <position position="1034"/>
    </location>
</feature>
<feature type="modified residue" description="Phosphoserine" evidence="2">
    <location>
        <position position="1041"/>
    </location>
</feature>
<feature type="modified residue" description="Phosphoserine" evidence="2">
    <location>
        <position position="1042"/>
    </location>
</feature>
<dbReference type="EMBL" id="AC117058">
    <property type="status" value="NOT_ANNOTATED_CDS"/>
    <property type="molecule type" value="Genomic_DNA"/>
</dbReference>
<dbReference type="EMBL" id="Z35654">
    <property type="protein sequence ID" value="CAA84713.1"/>
    <property type="status" value="ALT_SEQ"/>
    <property type="molecule type" value="mRNA"/>
</dbReference>
<dbReference type="PIR" id="S51620">
    <property type="entry name" value="S51620"/>
</dbReference>
<dbReference type="RefSeq" id="XP_038950094.1">
    <property type="nucleotide sequence ID" value="XM_039094166.2"/>
</dbReference>
<dbReference type="SMR" id="Q63406"/>
<dbReference type="CORUM" id="Q63406"/>
<dbReference type="FunCoup" id="Q63406">
    <property type="interactions" value="581"/>
</dbReference>
<dbReference type="STRING" id="10116.ENSRNOP00000075224"/>
<dbReference type="GlyGen" id="Q63406">
    <property type="glycosylation" value="1 site"/>
</dbReference>
<dbReference type="iPTMnet" id="Q63406"/>
<dbReference type="PhosphoSitePlus" id="Q63406"/>
<dbReference type="PaxDb" id="10116-ENSRNOP00000023352"/>
<dbReference type="Ensembl" id="ENSRNOT00000079096.2">
    <property type="protein sequence ID" value="ENSRNOP00000068993.2"/>
    <property type="gene ID" value="ENSRNOG00000028426.8"/>
</dbReference>
<dbReference type="GeneID" id="117020"/>
<dbReference type="UCSC" id="RGD:619782">
    <property type="organism name" value="rat"/>
</dbReference>
<dbReference type="AGR" id="RGD:619782"/>
<dbReference type="RGD" id="619782">
    <property type="gene designation" value="Mcf2l"/>
</dbReference>
<dbReference type="eggNOG" id="KOG4240">
    <property type="taxonomic scope" value="Eukaryota"/>
</dbReference>
<dbReference type="GeneTree" id="ENSGT00940000157874"/>
<dbReference type="InParanoid" id="Q63406"/>
<dbReference type="Reactome" id="R-RNO-193648">
    <property type="pathway name" value="NRAGE signals death through JNK"/>
</dbReference>
<dbReference type="Reactome" id="R-RNO-416482">
    <property type="pathway name" value="G alpha (12/13) signalling events"/>
</dbReference>
<dbReference type="Reactome" id="R-RNO-8980692">
    <property type="pathway name" value="RHOA GTPase cycle"/>
</dbReference>
<dbReference type="Reactome" id="R-RNO-9013026">
    <property type="pathway name" value="RHOB GTPase cycle"/>
</dbReference>
<dbReference type="Reactome" id="R-RNO-9013148">
    <property type="pathway name" value="CDC42 GTPase cycle"/>
</dbReference>
<dbReference type="Reactome" id="R-RNO-9013149">
    <property type="pathway name" value="RAC1 GTPase cycle"/>
</dbReference>
<dbReference type="Reactome" id="R-RNO-9013408">
    <property type="pathway name" value="RHOG GTPase cycle"/>
</dbReference>
<dbReference type="PRO" id="PR:Q63406"/>
<dbReference type="Proteomes" id="UP000002494">
    <property type="component" value="Chromosome 16"/>
</dbReference>
<dbReference type="Bgee" id="ENSRNOG00000028426">
    <property type="expression patterns" value="Expressed in frontal cortex and 19 other cell types or tissues"/>
</dbReference>
<dbReference type="ExpressionAtlas" id="Q63406">
    <property type="expression patterns" value="baseline and differential"/>
</dbReference>
<dbReference type="GO" id="GO:0005737">
    <property type="term" value="C:cytoplasm"/>
    <property type="evidence" value="ECO:0000314"/>
    <property type="project" value="UniProtKB"/>
</dbReference>
<dbReference type="GO" id="GO:0030027">
    <property type="term" value="C:lamellipodium"/>
    <property type="evidence" value="ECO:0000266"/>
    <property type="project" value="RGD"/>
</dbReference>
<dbReference type="GO" id="GO:0016020">
    <property type="term" value="C:membrane"/>
    <property type="evidence" value="ECO:0000266"/>
    <property type="project" value="RGD"/>
</dbReference>
<dbReference type="GO" id="GO:0005886">
    <property type="term" value="C:plasma membrane"/>
    <property type="evidence" value="ECO:0007669"/>
    <property type="project" value="UniProtKB-SubCell"/>
</dbReference>
<dbReference type="GO" id="GO:0005545">
    <property type="term" value="F:1-phosphatidylinositol binding"/>
    <property type="evidence" value="ECO:0000266"/>
    <property type="project" value="RGD"/>
</dbReference>
<dbReference type="GO" id="GO:0005085">
    <property type="term" value="F:guanyl-nucleotide exchange factor activity"/>
    <property type="evidence" value="ECO:0000314"/>
    <property type="project" value="UniProtKB"/>
</dbReference>
<dbReference type="GO" id="GO:0035091">
    <property type="term" value="F:phosphatidylinositol binding"/>
    <property type="evidence" value="ECO:0000266"/>
    <property type="project" value="RGD"/>
</dbReference>
<dbReference type="GO" id="GO:0035556">
    <property type="term" value="P:intracellular signal transduction"/>
    <property type="evidence" value="ECO:0000314"/>
    <property type="project" value="UniProtKB"/>
</dbReference>
<dbReference type="GO" id="GO:0045944">
    <property type="term" value="P:positive regulation of transcription by RNA polymerase II"/>
    <property type="evidence" value="ECO:0000266"/>
    <property type="project" value="RGD"/>
</dbReference>
<dbReference type="GO" id="GO:0007266">
    <property type="term" value="P:Rho protein signal transduction"/>
    <property type="evidence" value="ECO:0000266"/>
    <property type="project" value="RGD"/>
</dbReference>
<dbReference type="CDD" id="cd01227">
    <property type="entry name" value="PH_Dbs"/>
    <property type="match status" value="1"/>
</dbReference>
<dbReference type="CDD" id="cd00160">
    <property type="entry name" value="RhoGEF"/>
    <property type="match status" value="1"/>
</dbReference>
<dbReference type="CDD" id="cd00170">
    <property type="entry name" value="SEC14"/>
    <property type="match status" value="1"/>
</dbReference>
<dbReference type="CDD" id="cd11857">
    <property type="entry name" value="SH3_DBS"/>
    <property type="match status" value="1"/>
</dbReference>
<dbReference type="CDD" id="cd00176">
    <property type="entry name" value="SPEC"/>
    <property type="match status" value="1"/>
</dbReference>
<dbReference type="FunFam" id="1.20.900.10:FF:000001">
    <property type="entry name" value="Guanine nucleotide exchange factor DBS"/>
    <property type="match status" value="1"/>
</dbReference>
<dbReference type="FunFam" id="2.30.29.30:FF:000078">
    <property type="entry name" value="Guanine nucleotide exchange factor DBS"/>
    <property type="match status" value="1"/>
</dbReference>
<dbReference type="FunFam" id="1.20.58.60:FF:000136">
    <property type="entry name" value="MCF.2 cell line derived transforming sequence like"/>
    <property type="match status" value="1"/>
</dbReference>
<dbReference type="Gene3D" id="1.20.58.60">
    <property type="match status" value="1"/>
</dbReference>
<dbReference type="Gene3D" id="1.20.900.10">
    <property type="entry name" value="Dbl homology (DH) domain"/>
    <property type="match status" value="1"/>
</dbReference>
<dbReference type="Gene3D" id="2.30.29.30">
    <property type="entry name" value="Pleckstrin-homology domain (PH domain)/Phosphotyrosine-binding domain (PTB)"/>
    <property type="match status" value="1"/>
</dbReference>
<dbReference type="Gene3D" id="2.30.30.40">
    <property type="entry name" value="SH3 Domains"/>
    <property type="match status" value="1"/>
</dbReference>
<dbReference type="InterPro" id="IPR001251">
    <property type="entry name" value="CRAL-TRIO_dom"/>
</dbReference>
<dbReference type="InterPro" id="IPR036865">
    <property type="entry name" value="CRAL-TRIO_dom_sf"/>
</dbReference>
<dbReference type="InterPro" id="IPR035899">
    <property type="entry name" value="DBL_dom_sf"/>
</dbReference>
<dbReference type="InterPro" id="IPR035534">
    <property type="entry name" value="DBS_PH"/>
</dbReference>
<dbReference type="InterPro" id="IPR035532">
    <property type="entry name" value="DBS_SH3"/>
</dbReference>
<dbReference type="InterPro" id="IPR000219">
    <property type="entry name" value="DH_dom"/>
</dbReference>
<dbReference type="InterPro" id="IPR001331">
    <property type="entry name" value="GDS_CDC24_CS"/>
</dbReference>
<dbReference type="InterPro" id="IPR011993">
    <property type="entry name" value="PH-like_dom_sf"/>
</dbReference>
<dbReference type="InterPro" id="IPR001849">
    <property type="entry name" value="PH_domain"/>
</dbReference>
<dbReference type="InterPro" id="IPR051336">
    <property type="entry name" value="RhoGEF_Guanine_NuclExch_SF"/>
</dbReference>
<dbReference type="InterPro" id="IPR036028">
    <property type="entry name" value="SH3-like_dom_sf"/>
</dbReference>
<dbReference type="InterPro" id="IPR001452">
    <property type="entry name" value="SH3_domain"/>
</dbReference>
<dbReference type="InterPro" id="IPR055251">
    <property type="entry name" value="SOS1_NGEF_PH"/>
</dbReference>
<dbReference type="InterPro" id="IPR018159">
    <property type="entry name" value="Spectrin/alpha-actinin"/>
</dbReference>
<dbReference type="InterPro" id="IPR056466">
    <property type="entry name" value="Spectrin_DBS"/>
</dbReference>
<dbReference type="InterPro" id="IPR002017">
    <property type="entry name" value="Spectrin_repeat"/>
</dbReference>
<dbReference type="PANTHER" id="PTHR22826:SF115">
    <property type="entry name" value="GUANINE NUCLEOTIDE EXCHANGE FACTOR DBS"/>
    <property type="match status" value="1"/>
</dbReference>
<dbReference type="PANTHER" id="PTHR22826">
    <property type="entry name" value="RHO GUANINE EXCHANGE FACTOR-RELATED"/>
    <property type="match status" value="1"/>
</dbReference>
<dbReference type="Pfam" id="PF13716">
    <property type="entry name" value="CRAL_TRIO_2"/>
    <property type="match status" value="1"/>
</dbReference>
<dbReference type="Pfam" id="PF00621">
    <property type="entry name" value="RhoGEF"/>
    <property type="match status" value="1"/>
</dbReference>
<dbReference type="Pfam" id="PF22697">
    <property type="entry name" value="SOS1_NGEF_PH"/>
    <property type="match status" value="1"/>
</dbReference>
<dbReference type="Pfam" id="PF00435">
    <property type="entry name" value="Spectrin"/>
    <property type="match status" value="1"/>
</dbReference>
<dbReference type="Pfam" id="PF23289">
    <property type="entry name" value="Spectrin_5"/>
    <property type="match status" value="1"/>
</dbReference>
<dbReference type="SMART" id="SM00233">
    <property type="entry name" value="PH"/>
    <property type="match status" value="1"/>
</dbReference>
<dbReference type="SMART" id="SM00325">
    <property type="entry name" value="RhoGEF"/>
    <property type="match status" value="1"/>
</dbReference>
<dbReference type="SMART" id="SM00516">
    <property type="entry name" value="SEC14"/>
    <property type="match status" value="1"/>
</dbReference>
<dbReference type="SMART" id="SM00326">
    <property type="entry name" value="SH3"/>
    <property type="match status" value="1"/>
</dbReference>
<dbReference type="SMART" id="SM00150">
    <property type="entry name" value="SPEC"/>
    <property type="match status" value="1"/>
</dbReference>
<dbReference type="SUPFAM" id="SSF52087">
    <property type="entry name" value="CRAL/TRIO domain"/>
    <property type="match status" value="1"/>
</dbReference>
<dbReference type="SUPFAM" id="SSF48065">
    <property type="entry name" value="DBL homology domain (DH-domain)"/>
    <property type="match status" value="1"/>
</dbReference>
<dbReference type="SUPFAM" id="SSF50729">
    <property type="entry name" value="PH domain-like"/>
    <property type="match status" value="1"/>
</dbReference>
<dbReference type="SUPFAM" id="SSF50044">
    <property type="entry name" value="SH3-domain"/>
    <property type="match status" value="1"/>
</dbReference>
<dbReference type="SUPFAM" id="SSF46966">
    <property type="entry name" value="Spectrin repeat"/>
    <property type="match status" value="1"/>
</dbReference>
<dbReference type="PROSITE" id="PS50191">
    <property type="entry name" value="CRAL_TRIO"/>
    <property type="match status" value="1"/>
</dbReference>
<dbReference type="PROSITE" id="PS00741">
    <property type="entry name" value="DH_1"/>
    <property type="match status" value="1"/>
</dbReference>
<dbReference type="PROSITE" id="PS50010">
    <property type="entry name" value="DH_2"/>
    <property type="match status" value="1"/>
</dbReference>
<dbReference type="PROSITE" id="PS50003">
    <property type="entry name" value="PH_DOMAIN"/>
    <property type="match status" value="1"/>
</dbReference>
<dbReference type="PROSITE" id="PS50002">
    <property type="entry name" value="SH3"/>
    <property type="match status" value="1"/>
</dbReference>
<proteinExistence type="evidence at protein level"/>
<name>MCF2L_RAT</name>
<comment type="function">
    <text evidence="9">Guanine nucleotide exchange factor that catalyzes guanine nucleotide exchange on RHOA and CDC42, and thereby contributes to the regulation of RHOA and CDC42 signaling pathways. Seems to lack activity with RAC1. Becomes activated and highly tumorigenic by truncation of the N-terminus.</text>
</comment>
<comment type="subunit">
    <text evidence="2 9">Interacts with GTP-bound RAC1 (PubMed:7957046). Interacts with CDC42. Interacts with RHOA. Interacts with CCPG1, which results in specific inhibition of its exchange activity toward RHOA, but does not affect its activity on CDC42 (By similarity).</text>
</comment>
<comment type="subcellular location">
    <subcellularLocation>
        <location evidence="9">Cytoplasm</location>
    </subcellularLocation>
    <subcellularLocation>
        <location evidence="2">Cell membrane</location>
        <topology evidence="2">Peripheral membrane protein</topology>
        <orientation evidence="2">Cytoplasmic side</orientation>
    </subcellularLocation>
</comment>
<comment type="tissue specificity">
    <text evidence="9">Highest expression in the brain, where it is found in neurons and alpha-tanycytes (at protein level). Detected in brain, and at lower levels in the heart.</text>
</comment>
<comment type="domain">
    <text evidence="1">The CRAL-TRIO domain mediates interaction with various inositol phospholipids, such as phosphatidylinositol 3-phosphate (PI3P), phosphatidylinositol 4-phosphate (PI4P) and phosphatidylinositol 5-phosphate (PI5P).</text>
</comment>
<comment type="domain">
    <text evidence="2">The DH domain is involved in interaction with CCPG1.</text>
</comment>
<comment type="PTM">
    <text evidence="9">Mainly phosphorylated on serine.</text>
</comment>
<comment type="similarity">
    <text evidence="11">Belongs to the MCF2 family.</text>
</comment>
<comment type="sequence caution" evidence="11">
    <conflict type="miscellaneous discrepancy">
        <sequence resource="EMBL-CDS" id="CAA84713"/>
    </conflict>
    <text>Probable cloning artifact.</text>
</comment>
<sequence length="1149" mass="129410">MSNCWCFIFCKERVRSNSSSPQHDGTSREEADHQVDVSDGIRLVPDKAEATMATASDEIMHQDIVPLCAADIQEQLKKRFAYLSGGRGQDGSPVITFPDYPAFSEIPDKEFQNVMTYLTSIPSLQDAGIGFILVIDRRQDKWTSVKASVLRIAASFPANLQLVLVLRPTGFFQRTLSDIAFKFNRDEFKMKVPVMMLSSVPELHGYIDKSQLTEDLGGTLDYCHSRWLCHRTAIESFALMVKQTAQMLQAFGTELAETELPNDVQSTSLVLSAHTEKKAKVKEDLQLALTEGNSILESLREPLAESIVHSVNQDQLDNQATVKRLLTQLNETEAAFDEFWAKHQQKLEQCLQLRHFEQGFREVKTALDSMSQKIAAFTDVGNSLAHVQHLLKDLTTFEEKSSVAVDKARALSLEGQQLIENRHYAVDSIHPKCEELQHLCDHFASEVTRRRDLLSKSLELHSLLETSMKWSDEGIFLLASQPVDKCQSQDGAEAALQEIEKFLETGAENKIQELNKIYKEYECILNQDLLEHVQKVFQKQESTEEMFHRRQASLKKLAAKQTRPVQPVAPRPEALTKSPSPSPGSWRSSENSSSEGNALRRGPYRRAKSEMSEPRQGRTSSTGEEEESLAILRRHVMNELLDTERAYVEELLCVLEGYAAEMDNPLMAHLISTGLQNKKNILFGNMEEIYHFHNRIFLRELESCIDCPELVGRCFLERMEEFQIYEKYCQNKPRSESLWRQCSDCPFFQECQKKLDHKLSLDSYLLKPVQRITKYQLLLKEMLKYSKHCEGAEDLQEALSSILGILKAVNDSMHLIAITGYDGNLGDLGKLLMQGSFSVWTDHKKGHTKVKELARFKPMQRHLFLHEKAVLFCKKREENGEGYEKAPSYSYKQSLNMTAVGITENVKGDTKKFEIWYNAREEVYIIQAPTPEIKAAWVNEIRKVLTSQLQACREASQHRALEQSHSLPLPTPASTSPTKGSTRNVKKLEDRKTDPLCLEGCVSSSLPKPPEKGKGWSKTSHSLEAPEEDGGWSSAEELINSSDAEEDGGVGPRKLVPGKYTVLMDGEKGGSDTLAMRSGDMVEVVEEGTEGLWYVRDLTSSKEGWVPASSLATLLGKSSSAQCLSSSGKTHCARQLCPEPAKILSPEPV</sequence>
<accession>Q63406</accession>
<protein>
    <recommendedName>
        <fullName>Guanine nucleotide exchange factor DBS</fullName>
    </recommendedName>
    <alternativeName>
        <fullName>DBL's big sister</fullName>
    </alternativeName>
    <alternativeName>
        <fullName>MCF2-transforming sequence-like protein</fullName>
    </alternativeName>
    <alternativeName>
        <fullName evidence="10">OST oncogene</fullName>
    </alternativeName>
</protein>
<organism>
    <name type="scientific">Rattus norvegicus</name>
    <name type="common">Rat</name>
    <dbReference type="NCBI Taxonomy" id="10116"/>
    <lineage>
        <taxon>Eukaryota</taxon>
        <taxon>Metazoa</taxon>
        <taxon>Chordata</taxon>
        <taxon>Craniata</taxon>
        <taxon>Vertebrata</taxon>
        <taxon>Euteleostomi</taxon>
        <taxon>Mammalia</taxon>
        <taxon>Eutheria</taxon>
        <taxon>Euarchontoglires</taxon>
        <taxon>Glires</taxon>
        <taxon>Rodentia</taxon>
        <taxon>Myomorpha</taxon>
        <taxon>Muroidea</taxon>
        <taxon>Muridae</taxon>
        <taxon>Murinae</taxon>
        <taxon>Rattus</taxon>
    </lineage>
</organism>
<keyword id="KW-1003">Cell membrane</keyword>
<keyword id="KW-0175">Coiled coil</keyword>
<keyword id="KW-0963">Cytoplasm</keyword>
<keyword id="KW-0344">Guanine-nucleotide releasing factor</keyword>
<keyword id="KW-0446">Lipid-binding</keyword>
<keyword id="KW-0472">Membrane</keyword>
<keyword id="KW-0597">Phosphoprotein</keyword>
<keyword id="KW-0656">Proto-oncogene</keyword>
<keyword id="KW-1185">Reference proteome</keyword>
<keyword id="KW-0728">SH3 domain</keyword>
<gene>
    <name type="primary">Mcf2l</name>
    <name evidence="10" type="synonym">Ost</name>
</gene>
<evidence type="ECO:0000250" key="1">
    <source>
        <dbReference type="UniProtKB" id="O15068"/>
    </source>
</evidence>
<evidence type="ECO:0000250" key="2">
    <source>
        <dbReference type="UniProtKB" id="Q64096"/>
    </source>
</evidence>
<evidence type="ECO:0000255" key="3"/>
<evidence type="ECO:0000255" key="4">
    <source>
        <dbReference type="PROSITE-ProRule" id="PRU00056"/>
    </source>
</evidence>
<evidence type="ECO:0000255" key="5">
    <source>
        <dbReference type="PROSITE-ProRule" id="PRU00062"/>
    </source>
</evidence>
<evidence type="ECO:0000255" key="6">
    <source>
        <dbReference type="PROSITE-ProRule" id="PRU00145"/>
    </source>
</evidence>
<evidence type="ECO:0000255" key="7">
    <source>
        <dbReference type="PROSITE-ProRule" id="PRU00192"/>
    </source>
</evidence>
<evidence type="ECO:0000256" key="8">
    <source>
        <dbReference type="SAM" id="MobiDB-lite"/>
    </source>
</evidence>
<evidence type="ECO:0000269" key="9">
    <source>
    </source>
</evidence>
<evidence type="ECO:0000303" key="10">
    <source>
    </source>
</evidence>
<evidence type="ECO:0000305" key="11"/>
<evidence type="ECO:0007744" key="12">
    <source>
    </source>
</evidence>
<reference key="1">
    <citation type="journal article" date="2004" name="Nature">
        <title>Genome sequence of the Brown Norway rat yields insights into mammalian evolution.</title>
        <authorList>
            <person name="Gibbs R.A."/>
            <person name="Weinstock G.M."/>
            <person name="Metzker M.L."/>
            <person name="Muzny D.M."/>
            <person name="Sodergren E.J."/>
            <person name="Scherer S."/>
            <person name="Scott G."/>
            <person name="Steffen D."/>
            <person name="Worley K.C."/>
            <person name="Burch P.E."/>
            <person name="Okwuonu G."/>
            <person name="Hines S."/>
            <person name="Lewis L."/>
            <person name="Deramo C."/>
            <person name="Delgado O."/>
            <person name="Dugan-Rocha S."/>
            <person name="Miner G."/>
            <person name="Morgan M."/>
            <person name="Hawes A."/>
            <person name="Gill R."/>
            <person name="Holt R.A."/>
            <person name="Adams M.D."/>
            <person name="Amanatides P.G."/>
            <person name="Baden-Tillson H."/>
            <person name="Barnstead M."/>
            <person name="Chin S."/>
            <person name="Evans C.A."/>
            <person name="Ferriera S."/>
            <person name="Fosler C."/>
            <person name="Glodek A."/>
            <person name="Gu Z."/>
            <person name="Jennings D."/>
            <person name="Kraft C.L."/>
            <person name="Nguyen T."/>
            <person name="Pfannkoch C.M."/>
            <person name="Sitter C."/>
            <person name="Sutton G.G."/>
            <person name="Venter J.C."/>
            <person name="Woodage T."/>
            <person name="Smith D."/>
            <person name="Lee H.-M."/>
            <person name="Gustafson E."/>
            <person name="Cahill P."/>
            <person name="Kana A."/>
            <person name="Doucette-Stamm L."/>
            <person name="Weinstock K."/>
            <person name="Fechtel K."/>
            <person name="Weiss R.B."/>
            <person name="Dunn D.M."/>
            <person name="Green E.D."/>
            <person name="Blakesley R.W."/>
            <person name="Bouffard G.G."/>
            <person name="De Jong P.J."/>
            <person name="Osoegawa K."/>
            <person name="Zhu B."/>
            <person name="Marra M."/>
            <person name="Schein J."/>
            <person name="Bosdet I."/>
            <person name="Fjell C."/>
            <person name="Jones S."/>
            <person name="Krzywinski M."/>
            <person name="Mathewson C."/>
            <person name="Siddiqui A."/>
            <person name="Wye N."/>
            <person name="McPherson J."/>
            <person name="Zhao S."/>
            <person name="Fraser C.M."/>
            <person name="Shetty J."/>
            <person name="Shatsman S."/>
            <person name="Geer K."/>
            <person name="Chen Y."/>
            <person name="Abramzon S."/>
            <person name="Nierman W.C."/>
            <person name="Havlak P.H."/>
            <person name="Chen R."/>
            <person name="Durbin K.J."/>
            <person name="Egan A."/>
            <person name="Ren Y."/>
            <person name="Song X.-Z."/>
            <person name="Li B."/>
            <person name="Liu Y."/>
            <person name="Qin X."/>
            <person name="Cawley S."/>
            <person name="Cooney A.J."/>
            <person name="D'Souza L.M."/>
            <person name="Martin K."/>
            <person name="Wu J.Q."/>
            <person name="Gonzalez-Garay M.L."/>
            <person name="Jackson A.R."/>
            <person name="Kalafus K.J."/>
            <person name="McLeod M.P."/>
            <person name="Milosavljevic A."/>
            <person name="Virk D."/>
            <person name="Volkov A."/>
            <person name="Wheeler D.A."/>
            <person name="Zhang Z."/>
            <person name="Bailey J.A."/>
            <person name="Eichler E.E."/>
            <person name="Tuzun E."/>
            <person name="Birney E."/>
            <person name="Mongin E."/>
            <person name="Ureta-Vidal A."/>
            <person name="Woodwark C."/>
            <person name="Zdobnov E."/>
            <person name="Bork P."/>
            <person name="Suyama M."/>
            <person name="Torrents D."/>
            <person name="Alexandersson M."/>
            <person name="Trask B.J."/>
            <person name="Young J.M."/>
            <person name="Huang H."/>
            <person name="Wang H."/>
            <person name="Xing H."/>
            <person name="Daniels S."/>
            <person name="Gietzen D."/>
            <person name="Schmidt J."/>
            <person name="Stevens K."/>
            <person name="Vitt U."/>
            <person name="Wingrove J."/>
            <person name="Camara F."/>
            <person name="Mar Alba M."/>
            <person name="Abril J.F."/>
            <person name="Guigo R."/>
            <person name="Smit A."/>
            <person name="Dubchak I."/>
            <person name="Rubin E.M."/>
            <person name="Couronne O."/>
            <person name="Poliakov A."/>
            <person name="Huebner N."/>
            <person name="Ganten D."/>
            <person name="Goesele C."/>
            <person name="Hummel O."/>
            <person name="Kreitler T."/>
            <person name="Lee Y.-A."/>
            <person name="Monti J."/>
            <person name="Schulz H."/>
            <person name="Zimdahl H."/>
            <person name="Himmelbauer H."/>
            <person name="Lehrach H."/>
            <person name="Jacob H.J."/>
            <person name="Bromberg S."/>
            <person name="Gullings-Handley J."/>
            <person name="Jensen-Seaman M.I."/>
            <person name="Kwitek A.E."/>
            <person name="Lazar J."/>
            <person name="Pasko D."/>
            <person name="Tonellato P.J."/>
            <person name="Twigger S."/>
            <person name="Ponting C.P."/>
            <person name="Duarte J.M."/>
            <person name="Rice S."/>
            <person name="Goodstadt L."/>
            <person name="Beatson S.A."/>
            <person name="Emes R.D."/>
            <person name="Winter E.E."/>
            <person name="Webber C."/>
            <person name="Brandt P."/>
            <person name="Nyakatura G."/>
            <person name="Adetobi M."/>
            <person name="Chiaromonte F."/>
            <person name="Elnitski L."/>
            <person name="Eswara P."/>
            <person name="Hardison R.C."/>
            <person name="Hou M."/>
            <person name="Kolbe D."/>
            <person name="Makova K."/>
            <person name="Miller W."/>
            <person name="Nekrutenko A."/>
            <person name="Riemer C."/>
            <person name="Schwartz S."/>
            <person name="Taylor J."/>
            <person name="Yang S."/>
            <person name="Zhang Y."/>
            <person name="Lindpaintner K."/>
            <person name="Andrews T.D."/>
            <person name="Caccamo M."/>
            <person name="Clamp M."/>
            <person name="Clarke L."/>
            <person name="Curwen V."/>
            <person name="Durbin R.M."/>
            <person name="Eyras E."/>
            <person name="Searle S.M."/>
            <person name="Cooper G.M."/>
            <person name="Batzoglou S."/>
            <person name="Brudno M."/>
            <person name="Sidow A."/>
            <person name="Stone E.A."/>
            <person name="Payseur B.A."/>
            <person name="Bourque G."/>
            <person name="Lopez-Otin C."/>
            <person name="Puente X.S."/>
            <person name="Chakrabarti K."/>
            <person name="Chatterji S."/>
            <person name="Dewey C."/>
            <person name="Pachter L."/>
            <person name="Bray N."/>
            <person name="Yap V.B."/>
            <person name="Caspi A."/>
            <person name="Tesler G."/>
            <person name="Pevzner P.A."/>
            <person name="Haussler D."/>
            <person name="Roskin K.M."/>
            <person name="Baertsch R."/>
            <person name="Clawson H."/>
            <person name="Furey T.S."/>
            <person name="Hinrichs A.S."/>
            <person name="Karolchik D."/>
            <person name="Kent W.J."/>
            <person name="Rosenbloom K.R."/>
            <person name="Trumbower H."/>
            <person name="Weirauch M."/>
            <person name="Cooper D.N."/>
            <person name="Stenson P.D."/>
            <person name="Ma B."/>
            <person name="Brent M."/>
            <person name="Arumugam M."/>
            <person name="Shteynberg D."/>
            <person name="Copley R.R."/>
            <person name="Taylor M.S."/>
            <person name="Riethman H."/>
            <person name="Mudunuri U."/>
            <person name="Peterson J."/>
            <person name="Guyer M."/>
            <person name="Felsenfeld A."/>
            <person name="Old S."/>
            <person name="Mockrin S."/>
            <person name="Collins F.S."/>
        </authorList>
    </citation>
    <scope>NUCLEOTIDE SEQUENCE [LARGE SCALE GENOMIC DNA]</scope>
    <source>
        <strain>Brown Norway</strain>
    </source>
</reference>
<reference key="2">
    <citation type="journal article" date="1994" name="EMBO J.">
        <title>A novel oncogene, ost, encodes a guanine nucleotide exchange factor that potentially links Rho and Rac signaling pathways.</title>
        <authorList>
            <person name="Horii Y."/>
            <person name="Beeler J.F."/>
            <person name="Sakaguchi K."/>
            <person name="Tachibana M."/>
            <person name="Miki T."/>
        </authorList>
    </citation>
    <scope>NUCLEOTIDE SEQUENCE [MRNA] OF 124-1058</scope>
    <scope>FUNCTION</scope>
    <scope>SUBCELLULAR LOCATION</scope>
    <scope>INTERACTION WITH RAC1</scope>
    <scope>PHOSPHORYLATION</scope>
    <scope>TISSUE SPECIFICITY</scope>
    <source>
        <tissue>Osteosarcoma</tissue>
    </source>
</reference>
<reference key="3">
    <citation type="journal article" date="2006" name="Proc. Natl. Acad. Sci. U.S.A.">
        <title>Quantitative phosphoproteomics of vasopressin-sensitive renal cells: regulation of aquaporin-2 phosphorylation at two sites.</title>
        <authorList>
            <person name="Hoffert J.D."/>
            <person name="Pisitkun T."/>
            <person name="Wang G."/>
            <person name="Shen R.-F."/>
            <person name="Knepper M.A."/>
        </authorList>
    </citation>
    <scope>PHOSPHORYLATION [LARGE SCALE ANALYSIS] AT SER-457; SER-462; SER-471 AND SER-480</scope>
    <scope>IDENTIFICATION BY MASS SPECTROMETRY [LARGE SCALE ANALYSIS]</scope>
</reference>
<reference key="4">
    <citation type="journal article" date="2012" name="Nat. Commun.">
        <title>Quantitative maps of protein phosphorylation sites across 14 different rat organs and tissues.</title>
        <authorList>
            <person name="Lundby A."/>
            <person name="Secher A."/>
            <person name="Lage K."/>
            <person name="Nordsborg N.B."/>
            <person name="Dmytriyev A."/>
            <person name="Lundby C."/>
            <person name="Olsen J.V."/>
        </authorList>
    </citation>
    <scope>IDENTIFICATION BY MASS SPECTROMETRY [LARGE SCALE ANALYSIS]</scope>
</reference>